<keyword id="KW-0150">Chloroplast</keyword>
<keyword id="KW-0934">Plastid</keyword>
<keyword id="KW-0687">Ribonucleoprotein</keyword>
<keyword id="KW-0689">Ribosomal protein</keyword>
<keyword id="KW-0694">RNA-binding</keyword>
<keyword id="KW-0699">rRNA-binding</keyword>
<reference key="1">
    <citation type="journal article" date="2007" name="Mol. Phylogenet. Evol.">
        <title>Phylogenetic and evolutionary implications of complete chloroplast genome sequences of four early-diverging angiosperms: Buxus (Buxaceae), Chloranthus (Chloranthaceae), Dioscorea (Dioscoreaceae), and Illicium (Schisandraceae).</title>
        <authorList>
            <person name="Hansen D.R."/>
            <person name="Dastidar S.G."/>
            <person name="Cai Z."/>
            <person name="Penaflor C."/>
            <person name="Kuehl J.V."/>
            <person name="Boore J.L."/>
            <person name="Jansen R.K."/>
        </authorList>
    </citation>
    <scope>NUCLEOTIDE SEQUENCE [LARGE SCALE GENOMIC DNA]</scope>
</reference>
<protein>
    <recommendedName>
        <fullName evidence="1">Large ribosomal subunit protein uL14c</fullName>
    </recommendedName>
    <alternativeName>
        <fullName evidence="2">50S ribosomal protein L14, chloroplastic</fullName>
    </alternativeName>
</protein>
<feature type="chain" id="PRO_0000355877" description="Large ribosomal subunit protein uL14c">
    <location>
        <begin position="1"/>
        <end position="122"/>
    </location>
</feature>
<organism>
    <name type="scientific">Dioscorea elephantipes</name>
    <name type="common">Elephant's foot yam</name>
    <name type="synonym">Testudinaria elephantipes</name>
    <dbReference type="NCBI Taxonomy" id="145284"/>
    <lineage>
        <taxon>Eukaryota</taxon>
        <taxon>Viridiplantae</taxon>
        <taxon>Streptophyta</taxon>
        <taxon>Embryophyta</taxon>
        <taxon>Tracheophyta</taxon>
        <taxon>Spermatophyta</taxon>
        <taxon>Magnoliopsida</taxon>
        <taxon>Liliopsida</taxon>
        <taxon>Dioscoreales</taxon>
        <taxon>Dioscoreaceae</taxon>
        <taxon>Dioscorea</taxon>
    </lineage>
</organism>
<evidence type="ECO:0000255" key="1">
    <source>
        <dbReference type="HAMAP-Rule" id="MF_01367"/>
    </source>
</evidence>
<evidence type="ECO:0000305" key="2"/>
<proteinExistence type="inferred from homology"/>
<dbReference type="EMBL" id="EF380353">
    <property type="protein sequence ID" value="ABR01466.1"/>
    <property type="molecule type" value="Genomic_DNA"/>
</dbReference>
<dbReference type="RefSeq" id="YP_001294389.1">
    <property type="nucleotide sequence ID" value="NC_009601.1"/>
</dbReference>
<dbReference type="SMR" id="A6MMP4"/>
<dbReference type="GeneID" id="5236582"/>
<dbReference type="GO" id="GO:0009507">
    <property type="term" value="C:chloroplast"/>
    <property type="evidence" value="ECO:0007669"/>
    <property type="project" value="UniProtKB-SubCell"/>
</dbReference>
<dbReference type="GO" id="GO:0022625">
    <property type="term" value="C:cytosolic large ribosomal subunit"/>
    <property type="evidence" value="ECO:0007669"/>
    <property type="project" value="TreeGrafter"/>
</dbReference>
<dbReference type="GO" id="GO:0070180">
    <property type="term" value="F:large ribosomal subunit rRNA binding"/>
    <property type="evidence" value="ECO:0007669"/>
    <property type="project" value="TreeGrafter"/>
</dbReference>
<dbReference type="GO" id="GO:0003735">
    <property type="term" value="F:structural constituent of ribosome"/>
    <property type="evidence" value="ECO:0007669"/>
    <property type="project" value="InterPro"/>
</dbReference>
<dbReference type="GO" id="GO:0006412">
    <property type="term" value="P:translation"/>
    <property type="evidence" value="ECO:0007669"/>
    <property type="project" value="UniProtKB-UniRule"/>
</dbReference>
<dbReference type="CDD" id="cd00337">
    <property type="entry name" value="Ribosomal_uL14"/>
    <property type="match status" value="1"/>
</dbReference>
<dbReference type="FunFam" id="2.40.150.20:FF:000002">
    <property type="entry name" value="50S ribosomal protein L14, chloroplastic"/>
    <property type="match status" value="1"/>
</dbReference>
<dbReference type="Gene3D" id="2.40.150.20">
    <property type="entry name" value="Ribosomal protein L14"/>
    <property type="match status" value="1"/>
</dbReference>
<dbReference type="HAMAP" id="MF_01367">
    <property type="entry name" value="Ribosomal_uL14"/>
    <property type="match status" value="1"/>
</dbReference>
<dbReference type="InterPro" id="IPR000218">
    <property type="entry name" value="Ribosomal_uL14"/>
</dbReference>
<dbReference type="InterPro" id="IPR005745">
    <property type="entry name" value="Ribosomal_uL14_bac-type"/>
</dbReference>
<dbReference type="InterPro" id="IPR019972">
    <property type="entry name" value="Ribosomal_uL14_CS"/>
</dbReference>
<dbReference type="InterPro" id="IPR036853">
    <property type="entry name" value="Ribosomal_uL14_sf"/>
</dbReference>
<dbReference type="NCBIfam" id="TIGR01067">
    <property type="entry name" value="rplN_bact"/>
    <property type="match status" value="1"/>
</dbReference>
<dbReference type="PANTHER" id="PTHR11761">
    <property type="entry name" value="50S/60S RIBOSOMAL PROTEIN L14/L23"/>
    <property type="match status" value="1"/>
</dbReference>
<dbReference type="PANTHER" id="PTHR11761:SF3">
    <property type="entry name" value="LARGE RIBOSOMAL SUBUNIT PROTEIN UL14M"/>
    <property type="match status" value="1"/>
</dbReference>
<dbReference type="Pfam" id="PF00238">
    <property type="entry name" value="Ribosomal_L14"/>
    <property type="match status" value="1"/>
</dbReference>
<dbReference type="SMART" id="SM01374">
    <property type="entry name" value="Ribosomal_L14"/>
    <property type="match status" value="1"/>
</dbReference>
<dbReference type="SUPFAM" id="SSF50193">
    <property type="entry name" value="Ribosomal protein L14"/>
    <property type="match status" value="1"/>
</dbReference>
<dbReference type="PROSITE" id="PS00049">
    <property type="entry name" value="RIBOSOMAL_L14"/>
    <property type="match status" value="1"/>
</dbReference>
<geneLocation type="chloroplast"/>
<accession>A6MMP4</accession>
<gene>
    <name evidence="1" type="primary">rpl14</name>
</gene>
<sequence length="122" mass="13505">MIQPQTLLNVADNSGARELMCIRIIGAGNPRYAHIGDVIVAVIKEAVPNMPLERSEVIRAVIVRTCKELKRNNGIIIRYDDNAAVVIDQEGNPKGTRVFGAIPRELRQFNFTKIVSLAPEVL</sequence>
<comment type="function">
    <text evidence="1">Binds to 23S rRNA.</text>
</comment>
<comment type="subunit">
    <text evidence="1">Part of the 50S ribosomal subunit.</text>
</comment>
<comment type="subcellular location">
    <subcellularLocation>
        <location>Plastid</location>
        <location>Chloroplast</location>
    </subcellularLocation>
</comment>
<comment type="similarity">
    <text evidence="1">Belongs to the universal ribosomal protein uL14 family.</text>
</comment>
<name>RK14_DIOEL</name>